<feature type="initiator methionine" description="Removed" evidence="1">
    <location>
        <position position="1"/>
    </location>
</feature>
<feature type="chain" id="PRO_0000288487" description="Cytosolic iron-sulfur assembly component 3">
    <location>
        <begin position="2"/>
        <end position="476"/>
    </location>
</feature>
<feature type="binding site" evidence="2">
    <location>
        <position position="24"/>
    </location>
    <ligand>
        <name>[4Fe-4S] cluster</name>
        <dbReference type="ChEBI" id="CHEBI:49883"/>
        <label>1</label>
    </ligand>
</feature>
<feature type="binding site" evidence="2">
    <location>
        <position position="71"/>
    </location>
    <ligand>
        <name>[4Fe-4S] cluster</name>
        <dbReference type="ChEBI" id="CHEBI:49883"/>
        <label>1</label>
    </ligand>
</feature>
<feature type="binding site" evidence="2">
    <location>
        <position position="74"/>
    </location>
    <ligand>
        <name>[4Fe-4S] cluster</name>
        <dbReference type="ChEBI" id="CHEBI:49883"/>
        <label>1</label>
    </ligand>
</feature>
<feature type="binding site" evidence="2">
    <location>
        <position position="77"/>
    </location>
    <ligand>
        <name>[4Fe-4S] cluster</name>
        <dbReference type="ChEBI" id="CHEBI:49883"/>
        <label>1</label>
    </ligand>
</feature>
<feature type="binding site" evidence="2">
    <location>
        <position position="190"/>
    </location>
    <ligand>
        <name>[4Fe-4S] cluster</name>
        <dbReference type="ChEBI" id="CHEBI:49883"/>
        <label>2</label>
    </ligand>
</feature>
<feature type="binding site" evidence="2">
    <location>
        <position position="246"/>
    </location>
    <ligand>
        <name>[4Fe-4S] cluster</name>
        <dbReference type="ChEBI" id="CHEBI:49883"/>
        <label>2</label>
    </ligand>
</feature>
<feature type="binding site" evidence="2">
    <location>
        <position position="395"/>
    </location>
    <ligand>
        <name>[4Fe-4S] cluster</name>
        <dbReference type="ChEBI" id="CHEBI:49883"/>
        <label>2</label>
    </ligand>
</feature>
<feature type="binding site" evidence="2">
    <location>
        <position position="399"/>
    </location>
    <ligand>
        <name>[4Fe-4S] cluster</name>
        <dbReference type="ChEBI" id="CHEBI:49883"/>
        <label>2</label>
    </ligand>
</feature>
<feature type="modified residue" description="N-acetylalanine" evidence="1">
    <location>
        <position position="2"/>
    </location>
</feature>
<proteinExistence type="evidence at transcript level"/>
<accession>Q5RF36</accession>
<sequence>MASPFSGALQLTDLDDFIGPSQECIKPVKVEKRAGSGVAKIRIEDDGSYFQINQDGGTRRLEKAKVSLNDCLACSGCITSAETVLITQQSHEELKKVLDANKMVAPSQQRLVVVSVSPQSRASLAARFQLNPTDTARKLTSFFKKIGVHFVFDTAFSRHFSLLESQREFVRRFRGQADCKQALPLLASACPGWICYAEKTHGSFILPHISTARSPQQVMGSLVKDFFAQQQHLTPDKIYHVTVMPCYDKKLEASRPDFFNQEHQTRDVDCVLTTGEVFRLLEEEGVSLPDLEPAPLDSLCSGASAEEPTSHRGGGSGGYLEHVFRHAARELFGIHVAEVTYKPLRNKDFQEVTLEKEGQVLLHLAMAYGFRNIQNLVQRLKRGRCPYHYVEVMACPSGCLNGGGQLQAPDRPSRELLQHVERLYGMVRAEAPEDAPGVQELYTHWLQGTDSECAGRLLHTQYHAVEKASTGLGIRW</sequence>
<gene>
    <name evidence="1" type="primary">CIAO3</name>
    <name evidence="1" type="synonym">NARFL</name>
</gene>
<protein>
    <recommendedName>
        <fullName evidence="3">Cytosolic iron-sulfur assembly component 3</fullName>
    </recommendedName>
    <alternativeName>
        <fullName>Cytosolic Fe-S cluster assembly factor NARFL</fullName>
    </alternativeName>
    <alternativeName>
        <fullName>Iron-only hydrogenase-like protein 1</fullName>
        <shortName>IOP1</shortName>
    </alternativeName>
    <alternativeName>
        <fullName>Nuclear prelamin A recognition factor-like protein</fullName>
    </alternativeName>
</protein>
<keyword id="KW-0004">4Fe-4S</keyword>
<keyword id="KW-0007">Acetylation</keyword>
<keyword id="KW-0408">Iron</keyword>
<keyword id="KW-0411">Iron-sulfur</keyword>
<keyword id="KW-0479">Metal-binding</keyword>
<keyword id="KW-1185">Reference proteome</keyword>
<organism>
    <name type="scientific">Pongo abelii</name>
    <name type="common">Sumatran orangutan</name>
    <name type="synonym">Pongo pygmaeus abelii</name>
    <dbReference type="NCBI Taxonomy" id="9601"/>
    <lineage>
        <taxon>Eukaryota</taxon>
        <taxon>Metazoa</taxon>
        <taxon>Chordata</taxon>
        <taxon>Craniata</taxon>
        <taxon>Vertebrata</taxon>
        <taxon>Euteleostomi</taxon>
        <taxon>Mammalia</taxon>
        <taxon>Eutheria</taxon>
        <taxon>Euarchontoglires</taxon>
        <taxon>Primates</taxon>
        <taxon>Haplorrhini</taxon>
        <taxon>Catarrhini</taxon>
        <taxon>Hominidae</taxon>
        <taxon>Pongo</taxon>
    </lineage>
</organism>
<name>CIAO3_PONAB</name>
<evidence type="ECO:0000250" key="1">
    <source>
        <dbReference type="UniProtKB" id="Q9H6Q4"/>
    </source>
</evidence>
<evidence type="ECO:0000255" key="2"/>
<evidence type="ECO:0000305" key="3"/>
<dbReference type="EMBL" id="CR857325">
    <property type="protein sequence ID" value="CAH89621.1"/>
    <property type="molecule type" value="mRNA"/>
</dbReference>
<dbReference type="RefSeq" id="NP_001124725.1">
    <property type="nucleotide sequence ID" value="NM_001131253.2"/>
</dbReference>
<dbReference type="SMR" id="Q5RF36"/>
<dbReference type="FunCoup" id="Q5RF36">
    <property type="interactions" value="156"/>
</dbReference>
<dbReference type="STRING" id="9601.ENSPPYP00000007848"/>
<dbReference type="GeneID" id="100171574"/>
<dbReference type="KEGG" id="pon:100171574"/>
<dbReference type="CTD" id="64428"/>
<dbReference type="eggNOG" id="KOG2439">
    <property type="taxonomic scope" value="Eukaryota"/>
</dbReference>
<dbReference type="InParanoid" id="Q5RF36"/>
<dbReference type="OrthoDB" id="10253113at2759"/>
<dbReference type="Proteomes" id="UP000001595">
    <property type="component" value="Unplaced"/>
</dbReference>
<dbReference type="GO" id="GO:0097361">
    <property type="term" value="C:cytosolic [4Fe-4S] assembly targeting complex"/>
    <property type="evidence" value="ECO:0000250"/>
    <property type="project" value="UniProtKB"/>
</dbReference>
<dbReference type="GO" id="GO:0051539">
    <property type="term" value="F:4 iron, 4 sulfur cluster binding"/>
    <property type="evidence" value="ECO:0007669"/>
    <property type="project" value="UniProtKB-KW"/>
</dbReference>
<dbReference type="GO" id="GO:0046872">
    <property type="term" value="F:metal ion binding"/>
    <property type="evidence" value="ECO:0007669"/>
    <property type="project" value="UniProtKB-KW"/>
</dbReference>
<dbReference type="GO" id="GO:0016226">
    <property type="term" value="P:iron-sulfur cluster assembly"/>
    <property type="evidence" value="ECO:0000250"/>
    <property type="project" value="UniProtKB"/>
</dbReference>
<dbReference type="FunFam" id="3.30.70.20:FF:000042">
    <property type="entry name" value="Cytosolic Fe-S cluster assembly factor NAR1"/>
    <property type="match status" value="1"/>
</dbReference>
<dbReference type="Gene3D" id="3.40.50.1780">
    <property type="match status" value="1"/>
</dbReference>
<dbReference type="Gene3D" id="3.40.950.10">
    <property type="entry name" value="Fe-only Hydrogenase (Larger Subunit), Chain L, domain 3"/>
    <property type="match status" value="1"/>
</dbReference>
<dbReference type="InterPro" id="IPR050340">
    <property type="entry name" value="Cytosolic_Fe-S_CAF"/>
</dbReference>
<dbReference type="InterPro" id="IPR009016">
    <property type="entry name" value="Fe_hydrogenase"/>
</dbReference>
<dbReference type="InterPro" id="IPR004108">
    <property type="entry name" value="Fe_hydrogenase_lsu_C"/>
</dbReference>
<dbReference type="InterPro" id="IPR003149">
    <property type="entry name" value="Fe_hydrogenase_ssu"/>
</dbReference>
<dbReference type="PANTHER" id="PTHR11615">
    <property type="entry name" value="NITRATE, FORMATE, IRON DEHYDROGENASE"/>
    <property type="match status" value="1"/>
</dbReference>
<dbReference type="Pfam" id="PF02906">
    <property type="entry name" value="Fe_hyd_lg_C"/>
    <property type="match status" value="1"/>
</dbReference>
<dbReference type="Pfam" id="PF02256">
    <property type="entry name" value="Fe_hyd_SSU"/>
    <property type="match status" value="1"/>
</dbReference>
<dbReference type="SMART" id="SM00902">
    <property type="entry name" value="Fe_hyd_SSU"/>
    <property type="match status" value="1"/>
</dbReference>
<dbReference type="SUPFAM" id="SSF53920">
    <property type="entry name" value="Fe-only hydrogenase"/>
    <property type="match status" value="1"/>
</dbReference>
<comment type="function">
    <text evidence="1">Component of the cytosolic iron-sulfur protein assembly (CIA) complex, a multiprotein complex that mediates the incorporation of iron-sulfur cluster into extramitochondrial Fe/S proteins. Seems to negatively regulate the level of HIF1A expression, although this effect could be indirect (By similarity).</text>
</comment>
<comment type="subunit">
    <text evidence="1">External component of the CIA complex. In the CIA complex, interacts directly with CIAO1 and MMS19.</text>
</comment>
<comment type="similarity">
    <text evidence="3">Belongs to the NARF family.</text>
</comment>
<reference key="1">
    <citation type="submission" date="2004-11" db="EMBL/GenBank/DDBJ databases">
        <authorList>
            <consortium name="The German cDNA consortium"/>
        </authorList>
    </citation>
    <scope>NUCLEOTIDE SEQUENCE [LARGE SCALE MRNA]</scope>
    <source>
        <tissue>Kidney</tissue>
    </source>
</reference>